<feature type="chain" id="PRO_1000166088" description="Large ribosomal subunit protein uL22">
    <location>
        <begin position="1"/>
        <end position="114"/>
    </location>
</feature>
<accession>C1CC11</accession>
<name>RL22_STRZJ</name>
<gene>
    <name evidence="1" type="primary">rplV</name>
    <name type="ordered locus">SPJ_0224</name>
</gene>
<comment type="function">
    <text evidence="1">This protein binds specifically to 23S rRNA; its binding is stimulated by other ribosomal proteins, e.g. L4, L17, and L20. It is important during the early stages of 50S assembly. It makes multiple contacts with different domains of the 23S rRNA in the assembled 50S subunit and ribosome (By similarity).</text>
</comment>
<comment type="function">
    <text evidence="1">The globular domain of the protein is located near the polypeptide exit tunnel on the outside of the subunit, while an extended beta-hairpin is found that lines the wall of the exit tunnel in the center of the 70S ribosome.</text>
</comment>
<comment type="subunit">
    <text evidence="1">Part of the 50S ribosomal subunit.</text>
</comment>
<comment type="similarity">
    <text evidence="1">Belongs to the universal ribosomal protein uL22 family.</text>
</comment>
<proteinExistence type="inferred from homology"/>
<evidence type="ECO:0000255" key="1">
    <source>
        <dbReference type="HAMAP-Rule" id="MF_01331"/>
    </source>
</evidence>
<evidence type="ECO:0000305" key="2"/>
<dbReference type="EMBL" id="CP000919">
    <property type="protein sequence ID" value="ACO19517.1"/>
    <property type="molecule type" value="Genomic_DNA"/>
</dbReference>
<dbReference type="RefSeq" id="WP_000818137.1">
    <property type="nucleotide sequence ID" value="NC_012466.1"/>
</dbReference>
<dbReference type="SMR" id="C1CC11"/>
<dbReference type="GeneID" id="93738962"/>
<dbReference type="KEGG" id="sjj:SPJ_0224"/>
<dbReference type="HOGENOM" id="CLU_083987_3_3_9"/>
<dbReference type="Proteomes" id="UP000002206">
    <property type="component" value="Chromosome"/>
</dbReference>
<dbReference type="GO" id="GO:0022625">
    <property type="term" value="C:cytosolic large ribosomal subunit"/>
    <property type="evidence" value="ECO:0007669"/>
    <property type="project" value="TreeGrafter"/>
</dbReference>
<dbReference type="GO" id="GO:0019843">
    <property type="term" value="F:rRNA binding"/>
    <property type="evidence" value="ECO:0007669"/>
    <property type="project" value="UniProtKB-UniRule"/>
</dbReference>
<dbReference type="GO" id="GO:0003735">
    <property type="term" value="F:structural constituent of ribosome"/>
    <property type="evidence" value="ECO:0007669"/>
    <property type="project" value="InterPro"/>
</dbReference>
<dbReference type="GO" id="GO:0006412">
    <property type="term" value="P:translation"/>
    <property type="evidence" value="ECO:0007669"/>
    <property type="project" value="UniProtKB-UniRule"/>
</dbReference>
<dbReference type="CDD" id="cd00336">
    <property type="entry name" value="Ribosomal_L22"/>
    <property type="match status" value="1"/>
</dbReference>
<dbReference type="FunFam" id="3.90.470.10:FF:000001">
    <property type="entry name" value="50S ribosomal protein L22"/>
    <property type="match status" value="1"/>
</dbReference>
<dbReference type="Gene3D" id="3.90.470.10">
    <property type="entry name" value="Ribosomal protein L22/L17"/>
    <property type="match status" value="1"/>
</dbReference>
<dbReference type="HAMAP" id="MF_01331_B">
    <property type="entry name" value="Ribosomal_uL22_B"/>
    <property type="match status" value="1"/>
</dbReference>
<dbReference type="InterPro" id="IPR001063">
    <property type="entry name" value="Ribosomal_uL22"/>
</dbReference>
<dbReference type="InterPro" id="IPR005727">
    <property type="entry name" value="Ribosomal_uL22_bac/chlpt-type"/>
</dbReference>
<dbReference type="InterPro" id="IPR047867">
    <property type="entry name" value="Ribosomal_uL22_bac/org-type"/>
</dbReference>
<dbReference type="InterPro" id="IPR018260">
    <property type="entry name" value="Ribosomal_uL22_CS"/>
</dbReference>
<dbReference type="InterPro" id="IPR036394">
    <property type="entry name" value="Ribosomal_uL22_sf"/>
</dbReference>
<dbReference type="NCBIfam" id="TIGR01044">
    <property type="entry name" value="rplV_bact"/>
    <property type="match status" value="1"/>
</dbReference>
<dbReference type="PANTHER" id="PTHR13501">
    <property type="entry name" value="CHLOROPLAST 50S RIBOSOMAL PROTEIN L22-RELATED"/>
    <property type="match status" value="1"/>
</dbReference>
<dbReference type="PANTHER" id="PTHR13501:SF8">
    <property type="entry name" value="LARGE RIBOSOMAL SUBUNIT PROTEIN UL22M"/>
    <property type="match status" value="1"/>
</dbReference>
<dbReference type="Pfam" id="PF00237">
    <property type="entry name" value="Ribosomal_L22"/>
    <property type="match status" value="1"/>
</dbReference>
<dbReference type="SUPFAM" id="SSF54843">
    <property type="entry name" value="Ribosomal protein L22"/>
    <property type="match status" value="1"/>
</dbReference>
<dbReference type="PROSITE" id="PS00464">
    <property type="entry name" value="RIBOSOMAL_L22"/>
    <property type="match status" value="1"/>
</dbReference>
<organism>
    <name type="scientific">Streptococcus pneumoniae (strain JJA)</name>
    <dbReference type="NCBI Taxonomy" id="488222"/>
    <lineage>
        <taxon>Bacteria</taxon>
        <taxon>Bacillati</taxon>
        <taxon>Bacillota</taxon>
        <taxon>Bacilli</taxon>
        <taxon>Lactobacillales</taxon>
        <taxon>Streptococcaceae</taxon>
        <taxon>Streptococcus</taxon>
    </lineage>
</organism>
<reference key="1">
    <citation type="journal article" date="2010" name="Genome Biol.">
        <title>Structure and dynamics of the pan-genome of Streptococcus pneumoniae and closely related species.</title>
        <authorList>
            <person name="Donati C."/>
            <person name="Hiller N.L."/>
            <person name="Tettelin H."/>
            <person name="Muzzi A."/>
            <person name="Croucher N.J."/>
            <person name="Angiuoli S.V."/>
            <person name="Oggioni M."/>
            <person name="Dunning Hotopp J.C."/>
            <person name="Hu F.Z."/>
            <person name="Riley D.R."/>
            <person name="Covacci A."/>
            <person name="Mitchell T.J."/>
            <person name="Bentley S.D."/>
            <person name="Kilian M."/>
            <person name="Ehrlich G.D."/>
            <person name="Rappuoli R."/>
            <person name="Moxon E.R."/>
            <person name="Masignani V."/>
        </authorList>
    </citation>
    <scope>NUCLEOTIDE SEQUENCE [LARGE SCALE GENOMIC DNA]</scope>
    <source>
        <strain>JJA</strain>
    </source>
</reference>
<sequence length="114" mass="12200">MAEITSAKAMARTVRVSPRKSRLVLDNIRGKSVADAIAILTFTPNKAAEIILKVLNSAVANAENNFGLDKANLVVSEAFANEGPTMKRFRPRAKGSASPINKRTAHITVAVAEK</sequence>
<protein>
    <recommendedName>
        <fullName evidence="1">Large ribosomal subunit protein uL22</fullName>
    </recommendedName>
    <alternativeName>
        <fullName evidence="2">50S ribosomal protein L22</fullName>
    </alternativeName>
</protein>
<keyword id="KW-0687">Ribonucleoprotein</keyword>
<keyword id="KW-0689">Ribosomal protein</keyword>
<keyword id="KW-0694">RNA-binding</keyword>
<keyword id="KW-0699">rRNA-binding</keyword>